<accession>C0QFM5</accession>
<proteinExistence type="inferred from homology"/>
<organism>
    <name type="scientific">Desulforapulum autotrophicum (strain ATCC 43914 / DSM 3382 / VKM B-1955 / HRM2)</name>
    <name type="common">Desulfobacterium autotrophicum</name>
    <dbReference type="NCBI Taxonomy" id="177437"/>
    <lineage>
        <taxon>Bacteria</taxon>
        <taxon>Pseudomonadati</taxon>
        <taxon>Thermodesulfobacteriota</taxon>
        <taxon>Desulfobacteria</taxon>
        <taxon>Desulfobacterales</taxon>
        <taxon>Desulfobacteraceae</taxon>
        <taxon>Desulforapulum</taxon>
    </lineage>
</organism>
<keyword id="KW-0436">Ligase</keyword>
<keyword id="KW-0597">Phosphoprotein</keyword>
<keyword id="KW-0662">Pyridine nucleotide biosynthesis</keyword>
<keyword id="KW-1185">Reference proteome</keyword>
<protein>
    <recommendedName>
        <fullName evidence="1">Nicotinate phosphoribosyltransferase</fullName>
        <shortName evidence="1">NAPRTase</shortName>
        <ecNumber evidence="1">6.3.4.21</ecNumber>
    </recommendedName>
</protein>
<reference key="1">
    <citation type="journal article" date="2009" name="Environ. Microbiol.">
        <title>Genome sequence of Desulfobacterium autotrophicum HRM2, a marine sulfate reducer oxidizing organic carbon completely to carbon dioxide.</title>
        <authorList>
            <person name="Strittmatter A.W."/>
            <person name="Liesegang H."/>
            <person name="Rabus R."/>
            <person name="Decker I."/>
            <person name="Amann J."/>
            <person name="Andres S."/>
            <person name="Henne A."/>
            <person name="Fricke W.F."/>
            <person name="Martinez-Arias R."/>
            <person name="Bartels D."/>
            <person name="Goesmann A."/>
            <person name="Krause L."/>
            <person name="Puehler A."/>
            <person name="Klenk H.P."/>
            <person name="Richter M."/>
            <person name="Schuler M."/>
            <person name="Gloeckner F.O."/>
            <person name="Meyerdierks A."/>
            <person name="Gottschalk G."/>
            <person name="Amann R."/>
        </authorList>
    </citation>
    <scope>NUCLEOTIDE SEQUENCE [LARGE SCALE GENOMIC DNA]</scope>
    <source>
        <strain>ATCC 43914 / DSM 3382 / VKM B-1955 / HRM2</strain>
    </source>
</reference>
<gene>
    <name evidence="1" type="primary">pncB</name>
    <name type="ordered locus">HRM2_02990</name>
</gene>
<sequence>MIQSILDNDLYKFTMQQAVHMLYPRVDVEYEFINRSNTPFPKDFAQRLQVEVQGMKNFRLTPEEKEYLDKTCYFMTPVYLDFLEHYTFDPDEVTVSQTNSELSVTIKGPWYRTILWEVPLMAIISELYFVMTNARPLPDEQIRVINLNKAKILSCNNIRYADFGTRRRFSSSGHEALIRDILALEHNTLIGTSNVNLARLFNIKPIGTMAHEWIMFHGVLNGYRMANPTAVAAWATAFHGHLGIALTDTFTTDIFLSTFDTLHAKLFDGVRHDSGDPIAFIDRIVDHYKKLHIDPITKTIVFSDGLDIDKAVHIHNHCINRIRDSYGIGTNLTNDVGVTPLNMVIKLAKCRTAPEKDWHNAIKLSDDKGKHTGDSEELAHCIKVLERGM</sequence>
<name>PNCB_DESAH</name>
<dbReference type="EC" id="6.3.4.21" evidence="1"/>
<dbReference type="EMBL" id="CP001087">
    <property type="protein sequence ID" value="ACN13421.1"/>
    <property type="molecule type" value="Genomic_DNA"/>
</dbReference>
<dbReference type="RefSeq" id="WP_012662670.1">
    <property type="nucleotide sequence ID" value="NC_012108.1"/>
</dbReference>
<dbReference type="SMR" id="C0QFM5"/>
<dbReference type="STRING" id="177437.HRM2_02990"/>
<dbReference type="KEGG" id="dat:HRM2_02990"/>
<dbReference type="eggNOG" id="COG1488">
    <property type="taxonomic scope" value="Bacteria"/>
</dbReference>
<dbReference type="HOGENOM" id="CLU_030991_1_0_7"/>
<dbReference type="OrthoDB" id="9771406at2"/>
<dbReference type="UniPathway" id="UPA00253">
    <property type="reaction ID" value="UER00457"/>
</dbReference>
<dbReference type="Proteomes" id="UP000000442">
    <property type="component" value="Chromosome"/>
</dbReference>
<dbReference type="GO" id="GO:0005829">
    <property type="term" value="C:cytosol"/>
    <property type="evidence" value="ECO:0007669"/>
    <property type="project" value="TreeGrafter"/>
</dbReference>
<dbReference type="GO" id="GO:0004516">
    <property type="term" value="F:nicotinate phosphoribosyltransferase activity"/>
    <property type="evidence" value="ECO:0007669"/>
    <property type="project" value="UniProtKB-UniRule"/>
</dbReference>
<dbReference type="GO" id="GO:0034355">
    <property type="term" value="P:NAD biosynthetic process via the salvage pathway"/>
    <property type="evidence" value="ECO:0007669"/>
    <property type="project" value="TreeGrafter"/>
</dbReference>
<dbReference type="Gene3D" id="3.20.140.10">
    <property type="entry name" value="nicotinate phosphoribosyltransferase"/>
    <property type="match status" value="1"/>
</dbReference>
<dbReference type="HAMAP" id="MF_00570">
    <property type="entry name" value="NAPRTase"/>
    <property type="match status" value="1"/>
</dbReference>
<dbReference type="InterPro" id="IPR041525">
    <property type="entry name" value="N/Namide_PRibTrfase"/>
</dbReference>
<dbReference type="InterPro" id="IPR040727">
    <property type="entry name" value="NAPRTase_N"/>
</dbReference>
<dbReference type="InterPro" id="IPR006406">
    <property type="entry name" value="Nic_PRibTrfase"/>
</dbReference>
<dbReference type="InterPro" id="IPR007229">
    <property type="entry name" value="Nic_PRibTrfase-Fam"/>
</dbReference>
<dbReference type="InterPro" id="IPR036068">
    <property type="entry name" value="Nicotinate_pribotase-like_C"/>
</dbReference>
<dbReference type="NCBIfam" id="TIGR01514">
    <property type="entry name" value="NAPRTase"/>
    <property type="match status" value="1"/>
</dbReference>
<dbReference type="NCBIfam" id="NF003704">
    <property type="entry name" value="PRK05321.1"/>
    <property type="match status" value="1"/>
</dbReference>
<dbReference type="PANTHER" id="PTHR11098">
    <property type="entry name" value="NICOTINATE PHOSPHORIBOSYLTRANSFERASE"/>
    <property type="match status" value="1"/>
</dbReference>
<dbReference type="PANTHER" id="PTHR11098:SF1">
    <property type="entry name" value="NICOTINATE PHOSPHORIBOSYLTRANSFERASE"/>
    <property type="match status" value="1"/>
</dbReference>
<dbReference type="Pfam" id="PF04095">
    <property type="entry name" value="NAPRTase"/>
    <property type="match status" value="1"/>
</dbReference>
<dbReference type="Pfam" id="PF17767">
    <property type="entry name" value="NAPRTase_N"/>
    <property type="match status" value="1"/>
</dbReference>
<dbReference type="PIRSF" id="PIRSF000484">
    <property type="entry name" value="NAPRT"/>
    <property type="match status" value="1"/>
</dbReference>
<dbReference type="SUPFAM" id="SSF51690">
    <property type="entry name" value="Nicotinate/Quinolinate PRTase C-terminal domain-like"/>
    <property type="match status" value="1"/>
</dbReference>
<dbReference type="SUPFAM" id="SSF54675">
    <property type="entry name" value="Nicotinate/Quinolinate PRTase N-terminal domain-like"/>
    <property type="match status" value="1"/>
</dbReference>
<feature type="chain" id="PRO_1000212082" description="Nicotinate phosphoribosyltransferase">
    <location>
        <begin position="1"/>
        <end position="389"/>
    </location>
</feature>
<feature type="modified residue" description="Phosphohistidine; by autocatalysis" evidence="1">
    <location>
        <position position="211"/>
    </location>
</feature>
<comment type="function">
    <text evidence="1">Catalyzes the synthesis of beta-nicotinate D-ribonucleotide from nicotinate and 5-phospho-D-ribose 1-phosphate at the expense of ATP.</text>
</comment>
<comment type="catalytic activity">
    <reaction evidence="1">
        <text>nicotinate + 5-phospho-alpha-D-ribose 1-diphosphate + ATP + H2O = nicotinate beta-D-ribonucleotide + ADP + phosphate + diphosphate</text>
        <dbReference type="Rhea" id="RHEA:36163"/>
        <dbReference type="ChEBI" id="CHEBI:15377"/>
        <dbReference type="ChEBI" id="CHEBI:30616"/>
        <dbReference type="ChEBI" id="CHEBI:32544"/>
        <dbReference type="ChEBI" id="CHEBI:33019"/>
        <dbReference type="ChEBI" id="CHEBI:43474"/>
        <dbReference type="ChEBI" id="CHEBI:57502"/>
        <dbReference type="ChEBI" id="CHEBI:58017"/>
        <dbReference type="ChEBI" id="CHEBI:456216"/>
        <dbReference type="EC" id="6.3.4.21"/>
    </reaction>
</comment>
<comment type="pathway">
    <text evidence="1">Cofactor biosynthesis; NAD(+) biosynthesis; nicotinate D-ribonucleotide from nicotinate: step 1/1.</text>
</comment>
<comment type="PTM">
    <text evidence="1">Transiently phosphorylated on a His residue during the reaction cycle. Phosphorylation strongly increases the affinity for substrates and increases the rate of nicotinate D-ribonucleotide production. Dephosphorylation regenerates the low-affinity form of the enzyme, leading to product release.</text>
</comment>
<comment type="similarity">
    <text evidence="1">Belongs to the NAPRTase family.</text>
</comment>
<evidence type="ECO:0000255" key="1">
    <source>
        <dbReference type="HAMAP-Rule" id="MF_00570"/>
    </source>
</evidence>